<accession>Q0VQR8</accession>
<gene>
    <name evidence="1" type="primary">nqrA</name>
    <name type="ordered locus">ABO_1032</name>
</gene>
<evidence type="ECO:0000255" key="1">
    <source>
        <dbReference type="HAMAP-Rule" id="MF_00425"/>
    </source>
</evidence>
<name>NQRA_ALCBS</name>
<dbReference type="EC" id="7.2.1.1" evidence="1"/>
<dbReference type="EMBL" id="AM286690">
    <property type="protein sequence ID" value="CAL16480.1"/>
    <property type="molecule type" value="Genomic_DNA"/>
</dbReference>
<dbReference type="RefSeq" id="WP_011588316.1">
    <property type="nucleotide sequence ID" value="NC_008260.1"/>
</dbReference>
<dbReference type="SMR" id="Q0VQR8"/>
<dbReference type="STRING" id="393595.ABO_1032"/>
<dbReference type="KEGG" id="abo:ABO_1032"/>
<dbReference type="eggNOG" id="COG1726">
    <property type="taxonomic scope" value="Bacteria"/>
</dbReference>
<dbReference type="HOGENOM" id="CLU_046656_0_0_6"/>
<dbReference type="OrthoDB" id="9774536at2"/>
<dbReference type="Proteomes" id="UP000008871">
    <property type="component" value="Chromosome"/>
</dbReference>
<dbReference type="GO" id="GO:0016655">
    <property type="term" value="F:oxidoreductase activity, acting on NAD(P)H, quinone or similar compound as acceptor"/>
    <property type="evidence" value="ECO:0007669"/>
    <property type="project" value="UniProtKB-UniRule"/>
</dbReference>
<dbReference type="GO" id="GO:0006814">
    <property type="term" value="P:sodium ion transport"/>
    <property type="evidence" value="ECO:0007669"/>
    <property type="project" value="UniProtKB-UniRule"/>
</dbReference>
<dbReference type="HAMAP" id="MF_00425">
    <property type="entry name" value="NqrA"/>
    <property type="match status" value="1"/>
</dbReference>
<dbReference type="InterPro" id="IPR008703">
    <property type="entry name" value="NqrA"/>
</dbReference>
<dbReference type="InterPro" id="IPR056148">
    <property type="entry name" value="NQRA_2nd"/>
</dbReference>
<dbReference type="InterPro" id="IPR022615">
    <property type="entry name" value="NqrA_C_domain"/>
</dbReference>
<dbReference type="InterPro" id="IPR056147">
    <property type="entry name" value="NQRA_N"/>
</dbReference>
<dbReference type="NCBIfam" id="TIGR01936">
    <property type="entry name" value="nqrA"/>
    <property type="match status" value="1"/>
</dbReference>
<dbReference type="NCBIfam" id="NF003759">
    <property type="entry name" value="PRK05352.1-2"/>
    <property type="match status" value="1"/>
</dbReference>
<dbReference type="PANTHER" id="PTHR37839">
    <property type="entry name" value="NA(+)-TRANSLOCATING NADH-QUINONE REDUCTASE SUBUNIT A"/>
    <property type="match status" value="1"/>
</dbReference>
<dbReference type="PANTHER" id="PTHR37839:SF1">
    <property type="entry name" value="NA(+)-TRANSLOCATING NADH-QUINONE REDUCTASE SUBUNIT A"/>
    <property type="match status" value="1"/>
</dbReference>
<dbReference type="Pfam" id="PF24836">
    <property type="entry name" value="NQRA_2nd"/>
    <property type="match status" value="1"/>
</dbReference>
<dbReference type="Pfam" id="PF05896">
    <property type="entry name" value="NQRA_N"/>
    <property type="match status" value="1"/>
</dbReference>
<dbReference type="Pfam" id="PF11973">
    <property type="entry name" value="NQRA_SLBB"/>
    <property type="match status" value="1"/>
</dbReference>
<keyword id="KW-0406">Ion transport</keyword>
<keyword id="KW-0520">NAD</keyword>
<keyword id="KW-1185">Reference proteome</keyword>
<keyword id="KW-0915">Sodium</keyword>
<keyword id="KW-0739">Sodium transport</keyword>
<keyword id="KW-1278">Translocase</keyword>
<keyword id="KW-0813">Transport</keyword>
<keyword id="KW-0830">Ubiquinone</keyword>
<reference key="1">
    <citation type="journal article" date="2006" name="Nat. Biotechnol.">
        <title>Genome sequence of the ubiquitous hydrocarbon-degrading marine bacterium Alcanivorax borkumensis.</title>
        <authorList>
            <person name="Schneiker S."/>
            <person name="Martins dos Santos V.A.P."/>
            <person name="Bartels D."/>
            <person name="Bekel T."/>
            <person name="Brecht M."/>
            <person name="Buhrmester J."/>
            <person name="Chernikova T.N."/>
            <person name="Denaro R."/>
            <person name="Ferrer M."/>
            <person name="Gertler C."/>
            <person name="Goesmann A."/>
            <person name="Golyshina O.V."/>
            <person name="Kaminski F."/>
            <person name="Khachane A.N."/>
            <person name="Lang S."/>
            <person name="Linke B."/>
            <person name="McHardy A.C."/>
            <person name="Meyer F."/>
            <person name="Nechitaylo T."/>
            <person name="Puehler A."/>
            <person name="Regenhardt D."/>
            <person name="Rupp O."/>
            <person name="Sabirova J.S."/>
            <person name="Selbitschka W."/>
            <person name="Yakimov M.M."/>
            <person name="Timmis K.N."/>
            <person name="Vorhoelter F.-J."/>
            <person name="Weidner S."/>
            <person name="Kaiser O."/>
            <person name="Golyshin P.N."/>
        </authorList>
    </citation>
    <scope>NUCLEOTIDE SEQUENCE [LARGE SCALE GENOMIC DNA]</scope>
    <source>
        <strain>ATCC 700651 / DSM 11573 / NCIMB 13689 / SK2</strain>
    </source>
</reference>
<sequence>MIKIRKGLDLPIAGAPRQAIEEGHQVRSVAVLGGDYVGMKPTMEVREGDVVKKGQLIFTDKKTEGVKYTSPAAGKVIAINRGHKRVLQSVVIEVADQEDEVTFASYSADQLRSLDRDAVQQQLVDSGEWTLLRTRPFGKVPAPGSTPNSVFVSILDTNPLALDPAVVIKENEQAFRHGLTVLSRLTDGPVWVCRGPNTDLPSFAGGQVREEAFSGKHPAGNVGTHIHYLDPVGLNKTVWSVGYQDVIAIGKLFTEGKISSARVVALTGPQAKTPRALRTRVGASVDDFAQGELKEGDNRLISGSVLNGHNARGPVAWLSRTTNQLTALREGHERELLGYISPGANRFSLMNIYLSKLMPGKRFNFTTTTNGSERAMVPVGAYEEVMPLDILPTQLLRALIVGDTDSATALGALELLEEDLSLCTFVCPGKYEYGPILRDNLTTIEAEG</sequence>
<comment type="function">
    <text evidence="1">NQR complex catalyzes the reduction of ubiquinone-1 to ubiquinol by two successive reactions, coupled with the transport of Na(+) ions from the cytoplasm to the periplasm. NqrA to NqrE are probably involved in the second step, the conversion of ubisemiquinone to ubiquinol.</text>
</comment>
<comment type="catalytic activity">
    <reaction evidence="1">
        <text>a ubiquinone + n Na(+)(in) + NADH + H(+) = a ubiquinol + n Na(+)(out) + NAD(+)</text>
        <dbReference type="Rhea" id="RHEA:47748"/>
        <dbReference type="Rhea" id="RHEA-COMP:9565"/>
        <dbReference type="Rhea" id="RHEA-COMP:9566"/>
        <dbReference type="ChEBI" id="CHEBI:15378"/>
        <dbReference type="ChEBI" id="CHEBI:16389"/>
        <dbReference type="ChEBI" id="CHEBI:17976"/>
        <dbReference type="ChEBI" id="CHEBI:29101"/>
        <dbReference type="ChEBI" id="CHEBI:57540"/>
        <dbReference type="ChEBI" id="CHEBI:57945"/>
        <dbReference type="EC" id="7.2.1.1"/>
    </reaction>
</comment>
<comment type="subunit">
    <text evidence="1">Composed of six subunits; NqrA, NqrB, NqrC, NqrD, NqrE and NqrF.</text>
</comment>
<comment type="similarity">
    <text evidence="1">Belongs to the NqrA family.</text>
</comment>
<proteinExistence type="inferred from homology"/>
<protein>
    <recommendedName>
        <fullName evidence="1">Na(+)-translocating NADH-quinone reductase subunit A</fullName>
        <shortName evidence="1">Na(+)-NQR subunit A</shortName>
        <shortName evidence="1">Na(+)-translocating NQR subunit A</shortName>
        <ecNumber evidence="1">7.2.1.1</ecNumber>
    </recommendedName>
    <alternativeName>
        <fullName evidence="1">NQR complex subunit A</fullName>
    </alternativeName>
    <alternativeName>
        <fullName evidence="1">NQR-1 subunit A</fullName>
    </alternativeName>
</protein>
<organism>
    <name type="scientific">Alcanivorax borkumensis (strain ATCC 700651 / DSM 11573 / NCIMB 13689 / SK2)</name>
    <dbReference type="NCBI Taxonomy" id="393595"/>
    <lineage>
        <taxon>Bacteria</taxon>
        <taxon>Pseudomonadati</taxon>
        <taxon>Pseudomonadota</taxon>
        <taxon>Gammaproteobacteria</taxon>
        <taxon>Oceanospirillales</taxon>
        <taxon>Alcanivoracaceae</taxon>
        <taxon>Alcanivorax</taxon>
    </lineage>
</organism>
<feature type="chain" id="PRO_1000060110" description="Na(+)-translocating NADH-quinone reductase subunit A">
    <location>
        <begin position="1"/>
        <end position="448"/>
    </location>
</feature>